<organism>
    <name type="scientific">Salmonella enteritidis PT4 (strain P125109)</name>
    <dbReference type="NCBI Taxonomy" id="550537"/>
    <lineage>
        <taxon>Bacteria</taxon>
        <taxon>Pseudomonadati</taxon>
        <taxon>Pseudomonadota</taxon>
        <taxon>Gammaproteobacteria</taxon>
        <taxon>Enterobacterales</taxon>
        <taxon>Enterobacteriaceae</taxon>
        <taxon>Salmonella</taxon>
    </lineage>
</organism>
<feature type="chain" id="PRO_1000100192" description="GTP cyclohydrolase 1">
    <location>
        <begin position="1"/>
        <end position="222"/>
    </location>
</feature>
<feature type="binding site" evidence="1">
    <location>
        <position position="111"/>
    </location>
    <ligand>
        <name>Zn(2+)</name>
        <dbReference type="ChEBI" id="CHEBI:29105"/>
    </ligand>
</feature>
<feature type="binding site" evidence="1">
    <location>
        <position position="114"/>
    </location>
    <ligand>
        <name>Zn(2+)</name>
        <dbReference type="ChEBI" id="CHEBI:29105"/>
    </ligand>
</feature>
<feature type="binding site" evidence="1">
    <location>
        <position position="182"/>
    </location>
    <ligand>
        <name>Zn(2+)</name>
        <dbReference type="ChEBI" id="CHEBI:29105"/>
    </ligand>
</feature>
<comment type="catalytic activity">
    <reaction evidence="1">
        <text>GTP + H2O = 7,8-dihydroneopterin 3'-triphosphate + formate + H(+)</text>
        <dbReference type="Rhea" id="RHEA:17473"/>
        <dbReference type="ChEBI" id="CHEBI:15377"/>
        <dbReference type="ChEBI" id="CHEBI:15378"/>
        <dbReference type="ChEBI" id="CHEBI:15740"/>
        <dbReference type="ChEBI" id="CHEBI:37565"/>
        <dbReference type="ChEBI" id="CHEBI:58462"/>
        <dbReference type="EC" id="3.5.4.16"/>
    </reaction>
</comment>
<comment type="pathway">
    <text evidence="1">Cofactor biosynthesis; 7,8-dihydroneopterin triphosphate biosynthesis; 7,8-dihydroneopterin triphosphate from GTP: step 1/1.</text>
</comment>
<comment type="subunit">
    <text evidence="1">Homomer.</text>
</comment>
<comment type="similarity">
    <text evidence="1">Belongs to the GTP cyclohydrolase I family.</text>
</comment>
<evidence type="ECO:0000255" key="1">
    <source>
        <dbReference type="HAMAP-Rule" id="MF_00223"/>
    </source>
</evidence>
<sequence length="222" mass="24771">MPSLSKEAALVHDALVARGLETPLRPPMDELDNETRKSLIAGHMTEIMQLLNLDLSDDSLMETPHRIAKMYVDEIFAGLDYANFPKITLIENKMKVDEMVTVRDITLTSTCEHHFVTIDGKATVAYIPKDSVIGLSKINRIVQFFAQRPQVQERLTQQILTALQTLLGTNNVAVSIDAVHYCVKARGIRDATSATTTTSLGGLFKSSQNTRQEFLRAVRHHP</sequence>
<protein>
    <recommendedName>
        <fullName evidence="1">GTP cyclohydrolase 1</fullName>
        <ecNumber evidence="1">3.5.4.16</ecNumber>
    </recommendedName>
    <alternativeName>
        <fullName evidence="1">GTP cyclohydrolase I</fullName>
        <shortName evidence="1">GTP-CH-I</shortName>
    </alternativeName>
</protein>
<name>GCH1_SALEP</name>
<accession>B5R163</accession>
<dbReference type="EC" id="3.5.4.16" evidence="1"/>
<dbReference type="EMBL" id="AM933172">
    <property type="protein sequence ID" value="CAR33771.1"/>
    <property type="molecule type" value="Genomic_DNA"/>
</dbReference>
<dbReference type="RefSeq" id="WP_001139611.1">
    <property type="nucleotide sequence ID" value="NC_011294.1"/>
</dbReference>
<dbReference type="SMR" id="B5R163"/>
<dbReference type="KEGG" id="set:SEN2186"/>
<dbReference type="HOGENOM" id="CLU_049768_3_2_6"/>
<dbReference type="UniPathway" id="UPA00848">
    <property type="reaction ID" value="UER00151"/>
</dbReference>
<dbReference type="Proteomes" id="UP000000613">
    <property type="component" value="Chromosome"/>
</dbReference>
<dbReference type="GO" id="GO:0005737">
    <property type="term" value="C:cytoplasm"/>
    <property type="evidence" value="ECO:0007669"/>
    <property type="project" value="TreeGrafter"/>
</dbReference>
<dbReference type="GO" id="GO:0005525">
    <property type="term" value="F:GTP binding"/>
    <property type="evidence" value="ECO:0007669"/>
    <property type="project" value="UniProtKB-KW"/>
</dbReference>
<dbReference type="GO" id="GO:0003934">
    <property type="term" value="F:GTP cyclohydrolase I activity"/>
    <property type="evidence" value="ECO:0007669"/>
    <property type="project" value="UniProtKB-UniRule"/>
</dbReference>
<dbReference type="GO" id="GO:0008270">
    <property type="term" value="F:zinc ion binding"/>
    <property type="evidence" value="ECO:0007669"/>
    <property type="project" value="UniProtKB-UniRule"/>
</dbReference>
<dbReference type="GO" id="GO:0006730">
    <property type="term" value="P:one-carbon metabolic process"/>
    <property type="evidence" value="ECO:0007669"/>
    <property type="project" value="UniProtKB-UniRule"/>
</dbReference>
<dbReference type="GO" id="GO:0006729">
    <property type="term" value="P:tetrahydrobiopterin biosynthetic process"/>
    <property type="evidence" value="ECO:0007669"/>
    <property type="project" value="TreeGrafter"/>
</dbReference>
<dbReference type="GO" id="GO:0046654">
    <property type="term" value="P:tetrahydrofolate biosynthetic process"/>
    <property type="evidence" value="ECO:0007669"/>
    <property type="project" value="UniProtKB-UniRule"/>
</dbReference>
<dbReference type="CDD" id="cd00642">
    <property type="entry name" value="GTP_cyclohydro1"/>
    <property type="match status" value="1"/>
</dbReference>
<dbReference type="FunFam" id="1.10.286.10:FF:000002">
    <property type="entry name" value="GTP cyclohydrolase 1"/>
    <property type="match status" value="1"/>
</dbReference>
<dbReference type="FunFam" id="3.30.1130.10:FF:000001">
    <property type="entry name" value="GTP cyclohydrolase 1"/>
    <property type="match status" value="1"/>
</dbReference>
<dbReference type="Gene3D" id="1.10.286.10">
    <property type="match status" value="1"/>
</dbReference>
<dbReference type="Gene3D" id="3.30.1130.10">
    <property type="match status" value="1"/>
</dbReference>
<dbReference type="HAMAP" id="MF_00223">
    <property type="entry name" value="FolE"/>
    <property type="match status" value="1"/>
</dbReference>
<dbReference type="InterPro" id="IPR043133">
    <property type="entry name" value="GTP-CH-I_C/QueF"/>
</dbReference>
<dbReference type="InterPro" id="IPR043134">
    <property type="entry name" value="GTP-CH-I_N"/>
</dbReference>
<dbReference type="InterPro" id="IPR001474">
    <property type="entry name" value="GTP_CycHdrlase_I"/>
</dbReference>
<dbReference type="InterPro" id="IPR018234">
    <property type="entry name" value="GTP_CycHdrlase_I_CS"/>
</dbReference>
<dbReference type="InterPro" id="IPR020602">
    <property type="entry name" value="GTP_CycHdrlase_I_dom"/>
</dbReference>
<dbReference type="NCBIfam" id="TIGR00063">
    <property type="entry name" value="folE"/>
    <property type="match status" value="1"/>
</dbReference>
<dbReference type="NCBIfam" id="NF006824">
    <property type="entry name" value="PRK09347.1-1"/>
    <property type="match status" value="1"/>
</dbReference>
<dbReference type="NCBIfam" id="NF006825">
    <property type="entry name" value="PRK09347.1-2"/>
    <property type="match status" value="1"/>
</dbReference>
<dbReference type="NCBIfam" id="NF006826">
    <property type="entry name" value="PRK09347.1-3"/>
    <property type="match status" value="1"/>
</dbReference>
<dbReference type="PANTHER" id="PTHR11109:SF7">
    <property type="entry name" value="GTP CYCLOHYDROLASE 1"/>
    <property type="match status" value="1"/>
</dbReference>
<dbReference type="PANTHER" id="PTHR11109">
    <property type="entry name" value="GTP CYCLOHYDROLASE I"/>
    <property type="match status" value="1"/>
</dbReference>
<dbReference type="Pfam" id="PF01227">
    <property type="entry name" value="GTP_cyclohydroI"/>
    <property type="match status" value="1"/>
</dbReference>
<dbReference type="SUPFAM" id="SSF55620">
    <property type="entry name" value="Tetrahydrobiopterin biosynthesis enzymes-like"/>
    <property type="match status" value="1"/>
</dbReference>
<dbReference type="PROSITE" id="PS00859">
    <property type="entry name" value="GTP_CYCLOHYDROL_1_1"/>
    <property type="match status" value="1"/>
</dbReference>
<dbReference type="PROSITE" id="PS00860">
    <property type="entry name" value="GTP_CYCLOHYDROL_1_2"/>
    <property type="match status" value="1"/>
</dbReference>
<proteinExistence type="inferred from homology"/>
<gene>
    <name evidence="1" type="primary">folE</name>
    <name type="ordered locus">SEN2186</name>
</gene>
<keyword id="KW-0342">GTP-binding</keyword>
<keyword id="KW-0378">Hydrolase</keyword>
<keyword id="KW-0479">Metal-binding</keyword>
<keyword id="KW-0547">Nucleotide-binding</keyword>
<keyword id="KW-0554">One-carbon metabolism</keyword>
<keyword id="KW-0862">Zinc</keyword>
<reference key="1">
    <citation type="journal article" date="2008" name="Genome Res.">
        <title>Comparative genome analysis of Salmonella enteritidis PT4 and Salmonella gallinarum 287/91 provides insights into evolutionary and host adaptation pathways.</title>
        <authorList>
            <person name="Thomson N.R."/>
            <person name="Clayton D.J."/>
            <person name="Windhorst D."/>
            <person name="Vernikos G."/>
            <person name="Davidson S."/>
            <person name="Churcher C."/>
            <person name="Quail M.A."/>
            <person name="Stevens M."/>
            <person name="Jones M.A."/>
            <person name="Watson M."/>
            <person name="Barron A."/>
            <person name="Layton A."/>
            <person name="Pickard D."/>
            <person name="Kingsley R.A."/>
            <person name="Bignell A."/>
            <person name="Clark L."/>
            <person name="Harris B."/>
            <person name="Ormond D."/>
            <person name="Abdellah Z."/>
            <person name="Brooks K."/>
            <person name="Cherevach I."/>
            <person name="Chillingworth T."/>
            <person name="Woodward J."/>
            <person name="Norberczak H."/>
            <person name="Lord A."/>
            <person name="Arrowsmith C."/>
            <person name="Jagels K."/>
            <person name="Moule S."/>
            <person name="Mungall K."/>
            <person name="Saunders M."/>
            <person name="Whitehead S."/>
            <person name="Chabalgoity J.A."/>
            <person name="Maskell D."/>
            <person name="Humphreys T."/>
            <person name="Roberts M."/>
            <person name="Barrow P.A."/>
            <person name="Dougan G."/>
            <person name="Parkhill J."/>
        </authorList>
    </citation>
    <scope>NUCLEOTIDE SEQUENCE [LARGE SCALE GENOMIC DNA]</scope>
    <source>
        <strain>P125109</strain>
    </source>
</reference>